<organism>
    <name type="scientific">Xanthomonas axonopodis pv. citri (strain 306)</name>
    <dbReference type="NCBI Taxonomy" id="190486"/>
    <lineage>
        <taxon>Bacteria</taxon>
        <taxon>Pseudomonadati</taxon>
        <taxon>Pseudomonadota</taxon>
        <taxon>Gammaproteobacteria</taxon>
        <taxon>Lysobacterales</taxon>
        <taxon>Lysobacteraceae</taxon>
        <taxon>Xanthomonas</taxon>
    </lineage>
</organism>
<name>TDH_XANAC</name>
<sequence>MKALVKREANKGIWLEQVPVPTPGPNEVLIKLEKTAICGTDLHIYLWDEWSQRTIEPGLTIGHEFVGRVAELGSAVTGYQIGQRVSAEGHIVCGHCRNCRGGRPHLCPNTVGIGVNVNGAFAEYMVMPASNLWPIPDQIPSELAAFFDPYGNAAHCALEFDVIGEDVLITGAGPIGIIAAGICKHIGARNVVVTDVNDFRLKLAADMGATRVVNVSKTSLKDVMADLHMEGFDVGLEMSGNSRAFNDMLDCMYHGGKIAMLGIMPRGAGCDWDKIIFKGLTVQGIYGRKMYETWYKMTQLVLSGFPLHKVLTHQLPIDDFQKGFDLMEEGKAGKVVLSWN</sequence>
<evidence type="ECO:0000255" key="1">
    <source>
        <dbReference type="HAMAP-Rule" id="MF_00627"/>
    </source>
</evidence>
<accession>Q8PNN2</accession>
<reference key="1">
    <citation type="journal article" date="2002" name="Nature">
        <title>Comparison of the genomes of two Xanthomonas pathogens with differing host specificities.</title>
        <authorList>
            <person name="da Silva A.C.R."/>
            <person name="Ferro J.A."/>
            <person name="Reinach F.C."/>
            <person name="Farah C.S."/>
            <person name="Furlan L.R."/>
            <person name="Quaggio R.B."/>
            <person name="Monteiro-Vitorello C.B."/>
            <person name="Van Sluys M.A."/>
            <person name="Almeida N.F. Jr."/>
            <person name="Alves L.M.C."/>
            <person name="do Amaral A.M."/>
            <person name="Bertolini M.C."/>
            <person name="Camargo L.E.A."/>
            <person name="Camarotte G."/>
            <person name="Cannavan F."/>
            <person name="Cardozo J."/>
            <person name="Chambergo F."/>
            <person name="Ciapina L.P."/>
            <person name="Cicarelli R.M.B."/>
            <person name="Coutinho L.L."/>
            <person name="Cursino-Santos J.R."/>
            <person name="El-Dorry H."/>
            <person name="Faria J.B."/>
            <person name="Ferreira A.J.S."/>
            <person name="Ferreira R.C.C."/>
            <person name="Ferro M.I.T."/>
            <person name="Formighieri E.F."/>
            <person name="Franco M.C."/>
            <person name="Greggio C.C."/>
            <person name="Gruber A."/>
            <person name="Katsuyama A.M."/>
            <person name="Kishi L.T."/>
            <person name="Leite R.P."/>
            <person name="Lemos E.G.M."/>
            <person name="Lemos M.V.F."/>
            <person name="Locali E.C."/>
            <person name="Machado M.A."/>
            <person name="Madeira A.M.B.N."/>
            <person name="Martinez-Rossi N.M."/>
            <person name="Martins E.C."/>
            <person name="Meidanis J."/>
            <person name="Menck C.F.M."/>
            <person name="Miyaki C.Y."/>
            <person name="Moon D.H."/>
            <person name="Moreira L.M."/>
            <person name="Novo M.T.M."/>
            <person name="Okura V.K."/>
            <person name="Oliveira M.C."/>
            <person name="Oliveira V.R."/>
            <person name="Pereira H.A."/>
            <person name="Rossi A."/>
            <person name="Sena J.A.D."/>
            <person name="Silva C."/>
            <person name="de Souza R.F."/>
            <person name="Spinola L.A.F."/>
            <person name="Takita M.A."/>
            <person name="Tamura R.E."/>
            <person name="Teixeira E.C."/>
            <person name="Tezza R.I.D."/>
            <person name="Trindade dos Santos M."/>
            <person name="Truffi D."/>
            <person name="Tsai S.M."/>
            <person name="White F.F."/>
            <person name="Setubal J.C."/>
            <person name="Kitajima J.P."/>
        </authorList>
    </citation>
    <scope>NUCLEOTIDE SEQUENCE [LARGE SCALE GENOMIC DNA]</scope>
    <source>
        <strain>306</strain>
    </source>
</reference>
<protein>
    <recommendedName>
        <fullName evidence="1">L-threonine 3-dehydrogenase</fullName>
        <shortName evidence="1">TDH</shortName>
        <ecNumber evidence="1">1.1.1.103</ecNumber>
    </recommendedName>
</protein>
<proteinExistence type="inferred from homology"/>
<dbReference type="EC" id="1.1.1.103" evidence="1"/>
<dbReference type="EMBL" id="AE008923">
    <property type="protein sequence ID" value="AAM35905.1"/>
    <property type="molecule type" value="Genomic_DNA"/>
</dbReference>
<dbReference type="SMR" id="Q8PNN2"/>
<dbReference type="KEGG" id="xac:XAC1022"/>
<dbReference type="eggNOG" id="COG1063">
    <property type="taxonomic scope" value="Bacteria"/>
</dbReference>
<dbReference type="HOGENOM" id="CLU_026673_11_0_6"/>
<dbReference type="UniPathway" id="UPA00046">
    <property type="reaction ID" value="UER00505"/>
</dbReference>
<dbReference type="Proteomes" id="UP000000576">
    <property type="component" value="Chromosome"/>
</dbReference>
<dbReference type="GO" id="GO:0005737">
    <property type="term" value="C:cytoplasm"/>
    <property type="evidence" value="ECO:0007669"/>
    <property type="project" value="UniProtKB-SubCell"/>
</dbReference>
<dbReference type="GO" id="GO:0008743">
    <property type="term" value="F:L-threonine 3-dehydrogenase activity"/>
    <property type="evidence" value="ECO:0007669"/>
    <property type="project" value="UniProtKB-UniRule"/>
</dbReference>
<dbReference type="GO" id="GO:0008270">
    <property type="term" value="F:zinc ion binding"/>
    <property type="evidence" value="ECO:0007669"/>
    <property type="project" value="UniProtKB-UniRule"/>
</dbReference>
<dbReference type="GO" id="GO:0019518">
    <property type="term" value="P:L-threonine catabolic process to glycine"/>
    <property type="evidence" value="ECO:0007669"/>
    <property type="project" value="UniProtKB-UniPathway"/>
</dbReference>
<dbReference type="Gene3D" id="3.90.180.10">
    <property type="entry name" value="Medium-chain alcohol dehydrogenases, catalytic domain"/>
    <property type="match status" value="1"/>
</dbReference>
<dbReference type="Gene3D" id="3.40.50.720">
    <property type="entry name" value="NAD(P)-binding Rossmann-like Domain"/>
    <property type="match status" value="1"/>
</dbReference>
<dbReference type="HAMAP" id="MF_00627">
    <property type="entry name" value="Thr_dehydrog"/>
    <property type="match status" value="1"/>
</dbReference>
<dbReference type="InterPro" id="IPR013149">
    <property type="entry name" value="ADH-like_C"/>
</dbReference>
<dbReference type="InterPro" id="IPR013154">
    <property type="entry name" value="ADH-like_N"/>
</dbReference>
<dbReference type="InterPro" id="IPR002328">
    <property type="entry name" value="ADH_Zn_CS"/>
</dbReference>
<dbReference type="InterPro" id="IPR011032">
    <property type="entry name" value="GroES-like_sf"/>
</dbReference>
<dbReference type="InterPro" id="IPR004627">
    <property type="entry name" value="L-Threonine_3-DHase"/>
</dbReference>
<dbReference type="InterPro" id="IPR036291">
    <property type="entry name" value="NAD(P)-bd_dom_sf"/>
</dbReference>
<dbReference type="InterPro" id="IPR020843">
    <property type="entry name" value="PKS_ER"/>
</dbReference>
<dbReference type="InterPro" id="IPR050129">
    <property type="entry name" value="Zn_alcohol_dh"/>
</dbReference>
<dbReference type="NCBIfam" id="NF003808">
    <property type="entry name" value="PRK05396.1"/>
    <property type="match status" value="1"/>
</dbReference>
<dbReference type="NCBIfam" id="TIGR00692">
    <property type="entry name" value="tdh"/>
    <property type="match status" value="1"/>
</dbReference>
<dbReference type="PANTHER" id="PTHR43401">
    <property type="entry name" value="L-THREONINE 3-DEHYDROGENASE"/>
    <property type="match status" value="1"/>
</dbReference>
<dbReference type="PANTHER" id="PTHR43401:SF2">
    <property type="entry name" value="L-THREONINE 3-DEHYDROGENASE"/>
    <property type="match status" value="1"/>
</dbReference>
<dbReference type="Pfam" id="PF08240">
    <property type="entry name" value="ADH_N"/>
    <property type="match status" value="1"/>
</dbReference>
<dbReference type="Pfam" id="PF00107">
    <property type="entry name" value="ADH_zinc_N"/>
    <property type="match status" value="1"/>
</dbReference>
<dbReference type="SMART" id="SM00829">
    <property type="entry name" value="PKS_ER"/>
    <property type="match status" value="1"/>
</dbReference>
<dbReference type="SUPFAM" id="SSF50129">
    <property type="entry name" value="GroES-like"/>
    <property type="match status" value="1"/>
</dbReference>
<dbReference type="SUPFAM" id="SSF51735">
    <property type="entry name" value="NAD(P)-binding Rossmann-fold domains"/>
    <property type="match status" value="1"/>
</dbReference>
<dbReference type="PROSITE" id="PS00059">
    <property type="entry name" value="ADH_ZINC"/>
    <property type="match status" value="1"/>
</dbReference>
<comment type="function">
    <text evidence="1">Catalyzes the NAD(+)-dependent oxidation of L-threonine to 2-amino-3-ketobutyrate.</text>
</comment>
<comment type="catalytic activity">
    <reaction evidence="1">
        <text>L-threonine + NAD(+) = (2S)-2-amino-3-oxobutanoate + NADH + H(+)</text>
        <dbReference type="Rhea" id="RHEA:13161"/>
        <dbReference type="ChEBI" id="CHEBI:15378"/>
        <dbReference type="ChEBI" id="CHEBI:57540"/>
        <dbReference type="ChEBI" id="CHEBI:57926"/>
        <dbReference type="ChEBI" id="CHEBI:57945"/>
        <dbReference type="ChEBI" id="CHEBI:78948"/>
        <dbReference type="EC" id="1.1.1.103"/>
    </reaction>
</comment>
<comment type="cofactor">
    <cofactor evidence="1">
        <name>Zn(2+)</name>
        <dbReference type="ChEBI" id="CHEBI:29105"/>
    </cofactor>
    <text evidence="1">Binds 2 Zn(2+) ions per subunit.</text>
</comment>
<comment type="pathway">
    <text evidence="1">Amino-acid degradation; L-threonine degradation via oxydo-reductase pathway; glycine from L-threonine: step 1/2.</text>
</comment>
<comment type="subunit">
    <text evidence="1">Homotetramer.</text>
</comment>
<comment type="subcellular location">
    <subcellularLocation>
        <location evidence="1">Cytoplasm</location>
    </subcellularLocation>
</comment>
<comment type="similarity">
    <text evidence="1">Belongs to the zinc-containing alcohol dehydrogenase family.</text>
</comment>
<keyword id="KW-0963">Cytoplasm</keyword>
<keyword id="KW-0479">Metal-binding</keyword>
<keyword id="KW-0520">NAD</keyword>
<keyword id="KW-0560">Oxidoreductase</keyword>
<keyword id="KW-0862">Zinc</keyword>
<feature type="chain" id="PRO_0000160870" description="L-threonine 3-dehydrogenase">
    <location>
        <begin position="1"/>
        <end position="340"/>
    </location>
</feature>
<feature type="active site" description="Charge relay system" evidence="1">
    <location>
        <position position="40"/>
    </location>
</feature>
<feature type="active site" description="Charge relay system" evidence="1">
    <location>
        <position position="43"/>
    </location>
</feature>
<feature type="binding site" evidence="1">
    <location>
        <position position="38"/>
    </location>
    <ligand>
        <name>Zn(2+)</name>
        <dbReference type="ChEBI" id="CHEBI:29105"/>
        <label>1</label>
        <note>catalytic</note>
    </ligand>
</feature>
<feature type="binding site" evidence="1">
    <location>
        <position position="63"/>
    </location>
    <ligand>
        <name>Zn(2+)</name>
        <dbReference type="ChEBI" id="CHEBI:29105"/>
        <label>1</label>
        <note>catalytic</note>
    </ligand>
</feature>
<feature type="binding site" evidence="1">
    <location>
        <position position="64"/>
    </location>
    <ligand>
        <name>Zn(2+)</name>
        <dbReference type="ChEBI" id="CHEBI:29105"/>
        <label>1</label>
        <note>catalytic</note>
    </ligand>
</feature>
<feature type="binding site" evidence="1">
    <location>
        <position position="93"/>
    </location>
    <ligand>
        <name>Zn(2+)</name>
        <dbReference type="ChEBI" id="CHEBI:29105"/>
        <label>2</label>
    </ligand>
</feature>
<feature type="binding site" evidence="1">
    <location>
        <position position="96"/>
    </location>
    <ligand>
        <name>Zn(2+)</name>
        <dbReference type="ChEBI" id="CHEBI:29105"/>
        <label>2</label>
    </ligand>
</feature>
<feature type="binding site" evidence="1">
    <location>
        <position position="99"/>
    </location>
    <ligand>
        <name>Zn(2+)</name>
        <dbReference type="ChEBI" id="CHEBI:29105"/>
        <label>2</label>
    </ligand>
</feature>
<feature type="binding site" evidence="1">
    <location>
        <position position="107"/>
    </location>
    <ligand>
        <name>Zn(2+)</name>
        <dbReference type="ChEBI" id="CHEBI:29105"/>
        <label>2</label>
    </ligand>
</feature>
<feature type="binding site" evidence="1">
    <location>
        <position position="175"/>
    </location>
    <ligand>
        <name>NAD(+)</name>
        <dbReference type="ChEBI" id="CHEBI:57540"/>
    </ligand>
</feature>
<feature type="binding site" evidence="1">
    <location>
        <position position="195"/>
    </location>
    <ligand>
        <name>NAD(+)</name>
        <dbReference type="ChEBI" id="CHEBI:57540"/>
    </ligand>
</feature>
<feature type="binding site" evidence="1">
    <location>
        <position position="200"/>
    </location>
    <ligand>
        <name>NAD(+)</name>
        <dbReference type="ChEBI" id="CHEBI:57540"/>
    </ligand>
</feature>
<feature type="binding site" evidence="1">
    <location>
        <begin position="261"/>
        <end position="263"/>
    </location>
    <ligand>
        <name>NAD(+)</name>
        <dbReference type="ChEBI" id="CHEBI:57540"/>
    </ligand>
</feature>
<feature type="binding site" evidence="1">
    <location>
        <begin position="285"/>
        <end position="286"/>
    </location>
    <ligand>
        <name>NAD(+)</name>
        <dbReference type="ChEBI" id="CHEBI:57540"/>
    </ligand>
</feature>
<feature type="site" description="Important for catalytic activity for the proton relay mechanism but does not participate directly in the coordination of zinc atom" evidence="1">
    <location>
        <position position="148"/>
    </location>
</feature>
<gene>
    <name evidence="1" type="primary">tdh</name>
    <name type="ordered locus">XAC1022</name>
</gene>